<keyword id="KW-0687">Ribonucleoprotein</keyword>
<keyword id="KW-0689">Ribosomal protein</keyword>
<organism>
    <name type="scientific">Moorella thermoacetica (strain ATCC 39073 / JCM 9320)</name>
    <dbReference type="NCBI Taxonomy" id="264732"/>
    <lineage>
        <taxon>Bacteria</taxon>
        <taxon>Bacillati</taxon>
        <taxon>Bacillota</taxon>
        <taxon>Clostridia</taxon>
        <taxon>Moorellales</taxon>
        <taxon>Moorellaceae</taxon>
        <taxon>Moorella</taxon>
    </lineage>
</organism>
<sequence length="112" mass="12696">MAYRKLGRLAGHRKMMLRNIVTSLLKHGKIETTELRAKELKSLAEKMITLGKRGDLHSRRQALAYLLDEDVVTKLFKEIGPRYADKNGGYTRIVKTGFRQGDGAPMVLIELV</sequence>
<proteinExistence type="inferred from homology"/>
<feature type="chain" id="PRO_1000055871" description="Large ribosomal subunit protein bL17">
    <location>
        <begin position="1"/>
        <end position="112"/>
    </location>
</feature>
<name>RL17_MOOTA</name>
<dbReference type="EMBL" id="CP000232">
    <property type="protein sequence ID" value="ABC20712.1"/>
    <property type="molecule type" value="Genomic_DNA"/>
</dbReference>
<dbReference type="RefSeq" id="YP_431255.1">
    <property type="nucleotide sequence ID" value="NC_007644.1"/>
</dbReference>
<dbReference type="SMR" id="Q2RFS7"/>
<dbReference type="STRING" id="264732.Moth_2430"/>
<dbReference type="EnsemblBacteria" id="ABC20712">
    <property type="protein sequence ID" value="ABC20712"/>
    <property type="gene ID" value="Moth_2430"/>
</dbReference>
<dbReference type="KEGG" id="mta:Moth_2430"/>
<dbReference type="PATRIC" id="fig|264732.11.peg.2648"/>
<dbReference type="eggNOG" id="COG0203">
    <property type="taxonomic scope" value="Bacteria"/>
</dbReference>
<dbReference type="HOGENOM" id="CLU_074407_2_2_9"/>
<dbReference type="OrthoDB" id="9809073at2"/>
<dbReference type="GO" id="GO:0022625">
    <property type="term" value="C:cytosolic large ribosomal subunit"/>
    <property type="evidence" value="ECO:0007669"/>
    <property type="project" value="TreeGrafter"/>
</dbReference>
<dbReference type="GO" id="GO:0003735">
    <property type="term" value="F:structural constituent of ribosome"/>
    <property type="evidence" value="ECO:0007669"/>
    <property type="project" value="InterPro"/>
</dbReference>
<dbReference type="GO" id="GO:0006412">
    <property type="term" value="P:translation"/>
    <property type="evidence" value="ECO:0007669"/>
    <property type="project" value="UniProtKB-UniRule"/>
</dbReference>
<dbReference type="FunFam" id="3.90.1030.10:FF:000001">
    <property type="entry name" value="50S ribosomal protein L17"/>
    <property type="match status" value="1"/>
</dbReference>
<dbReference type="Gene3D" id="3.90.1030.10">
    <property type="entry name" value="Ribosomal protein L17"/>
    <property type="match status" value="1"/>
</dbReference>
<dbReference type="HAMAP" id="MF_01368">
    <property type="entry name" value="Ribosomal_bL17"/>
    <property type="match status" value="1"/>
</dbReference>
<dbReference type="InterPro" id="IPR000456">
    <property type="entry name" value="Ribosomal_bL17"/>
</dbReference>
<dbReference type="InterPro" id="IPR047859">
    <property type="entry name" value="Ribosomal_bL17_CS"/>
</dbReference>
<dbReference type="InterPro" id="IPR036373">
    <property type="entry name" value="Ribosomal_bL17_sf"/>
</dbReference>
<dbReference type="NCBIfam" id="TIGR00059">
    <property type="entry name" value="L17"/>
    <property type="match status" value="1"/>
</dbReference>
<dbReference type="PANTHER" id="PTHR14413:SF16">
    <property type="entry name" value="LARGE RIBOSOMAL SUBUNIT PROTEIN BL17M"/>
    <property type="match status" value="1"/>
</dbReference>
<dbReference type="PANTHER" id="PTHR14413">
    <property type="entry name" value="RIBOSOMAL PROTEIN L17"/>
    <property type="match status" value="1"/>
</dbReference>
<dbReference type="Pfam" id="PF01196">
    <property type="entry name" value="Ribosomal_L17"/>
    <property type="match status" value="1"/>
</dbReference>
<dbReference type="SUPFAM" id="SSF64263">
    <property type="entry name" value="Prokaryotic ribosomal protein L17"/>
    <property type="match status" value="1"/>
</dbReference>
<dbReference type="PROSITE" id="PS01167">
    <property type="entry name" value="RIBOSOMAL_L17"/>
    <property type="match status" value="1"/>
</dbReference>
<protein>
    <recommendedName>
        <fullName evidence="1">Large ribosomal subunit protein bL17</fullName>
    </recommendedName>
    <alternativeName>
        <fullName evidence="2">50S ribosomal protein L17</fullName>
    </alternativeName>
</protein>
<accession>Q2RFS7</accession>
<gene>
    <name evidence="1" type="primary">rplQ</name>
    <name type="ordered locus">Moth_2430</name>
</gene>
<reference key="1">
    <citation type="journal article" date="2008" name="Environ. Microbiol.">
        <title>The complete genome sequence of Moorella thermoacetica (f. Clostridium thermoaceticum).</title>
        <authorList>
            <person name="Pierce E."/>
            <person name="Xie G."/>
            <person name="Barabote R.D."/>
            <person name="Saunders E."/>
            <person name="Han C.S."/>
            <person name="Detter J.C."/>
            <person name="Richardson P."/>
            <person name="Brettin T.S."/>
            <person name="Das A."/>
            <person name="Ljungdahl L.G."/>
            <person name="Ragsdale S.W."/>
        </authorList>
    </citation>
    <scope>NUCLEOTIDE SEQUENCE [LARGE SCALE GENOMIC DNA]</scope>
    <source>
        <strain>ATCC 39073 / JCM 9320</strain>
    </source>
</reference>
<evidence type="ECO:0000255" key="1">
    <source>
        <dbReference type="HAMAP-Rule" id="MF_01368"/>
    </source>
</evidence>
<evidence type="ECO:0000305" key="2"/>
<comment type="subunit">
    <text evidence="1">Part of the 50S ribosomal subunit. Contacts protein L32.</text>
</comment>
<comment type="similarity">
    <text evidence="1">Belongs to the bacterial ribosomal protein bL17 family.</text>
</comment>